<organism>
    <name type="scientific">Cercocebus atys</name>
    <name type="common">Sooty mangabey</name>
    <name type="synonym">Cercocebus torquatus atys</name>
    <dbReference type="NCBI Taxonomy" id="9531"/>
    <lineage>
        <taxon>Eukaryota</taxon>
        <taxon>Metazoa</taxon>
        <taxon>Chordata</taxon>
        <taxon>Craniata</taxon>
        <taxon>Vertebrata</taxon>
        <taxon>Euteleostomi</taxon>
        <taxon>Mammalia</taxon>
        <taxon>Eutheria</taxon>
        <taxon>Euarchontoglires</taxon>
        <taxon>Primates</taxon>
        <taxon>Haplorrhini</taxon>
        <taxon>Catarrhini</taxon>
        <taxon>Cercopithecidae</taxon>
        <taxon>Cercopithecinae</taxon>
        <taxon>Cercocebus</taxon>
    </lineage>
</organism>
<sequence length="146" mass="15995">VHLTPEEKVAVTTLWGKVNVDEVGGEALGRLLVVYPWTQRFFESFGDLSNPDAVMGNPKVKAHGKKVLGAFSDGLNHLDNLKGTFAQLSELHCDKLHVDPENFKLLGNVLVCVLAHHFGKEFTPQVQAAYQKVVAGVANALAHKYH</sequence>
<comment type="function">
    <text>Involved in oxygen transport from the lung to the various peripheral tissues.</text>
</comment>
<comment type="subunit">
    <text>Heterotetramer of two alpha chains and two beta chains.</text>
</comment>
<comment type="tissue specificity">
    <text>Red blood cells.</text>
</comment>
<comment type="similarity">
    <text evidence="3">Belongs to the globin family.</text>
</comment>
<gene>
    <name type="primary">HBB</name>
</gene>
<evidence type="ECO:0000250" key="1">
    <source>
        <dbReference type="UniProtKB" id="P02086"/>
    </source>
</evidence>
<evidence type="ECO:0000250" key="2">
    <source>
        <dbReference type="UniProtKB" id="P68871"/>
    </source>
</evidence>
<evidence type="ECO:0000255" key="3">
    <source>
        <dbReference type="PROSITE-ProRule" id="PRU00238"/>
    </source>
</evidence>
<keyword id="KW-0007">Acetylation</keyword>
<keyword id="KW-0903">Direct protein sequencing</keyword>
<keyword id="KW-0349">Heme</keyword>
<keyword id="KW-0408">Iron</keyword>
<keyword id="KW-0479">Metal-binding</keyword>
<keyword id="KW-0561">Oxygen transport</keyword>
<keyword id="KW-0597">Phosphoprotein</keyword>
<keyword id="KW-1185">Reference proteome</keyword>
<keyword id="KW-0702">S-nitrosylation</keyword>
<keyword id="KW-0813">Transport</keyword>
<feature type="chain" id="PRO_0000052921" description="Hemoglobin subunit beta">
    <location>
        <begin position="1"/>
        <end position="146"/>
    </location>
</feature>
<feature type="domain" description="Globin" evidence="3">
    <location>
        <begin position="2"/>
        <end position="146"/>
    </location>
</feature>
<feature type="binding site" description="distal binding residue">
    <location>
        <position position="63"/>
    </location>
    <ligand>
        <name>heme b</name>
        <dbReference type="ChEBI" id="CHEBI:60344"/>
    </ligand>
    <ligandPart>
        <name>Fe</name>
        <dbReference type="ChEBI" id="CHEBI:18248"/>
    </ligandPart>
</feature>
<feature type="binding site" description="proximal binding residue">
    <location>
        <position position="92"/>
    </location>
    <ligand>
        <name>heme b</name>
        <dbReference type="ChEBI" id="CHEBI:60344"/>
    </ligand>
    <ligandPart>
        <name>Fe</name>
        <dbReference type="ChEBI" id="CHEBI:18248"/>
    </ligandPart>
</feature>
<feature type="modified residue" description="N-acetylvaline" evidence="1">
    <location>
        <position position="1"/>
    </location>
</feature>
<feature type="modified residue" description="Phosphothreonine" evidence="2">
    <location>
        <position position="12"/>
    </location>
</feature>
<feature type="modified residue" description="Phosphoserine" evidence="2">
    <location>
        <position position="44"/>
    </location>
</feature>
<feature type="modified residue" description="N6-acetyllysine" evidence="2">
    <location>
        <position position="59"/>
    </location>
</feature>
<feature type="modified residue" description="N6-acetyllysine" evidence="2">
    <location>
        <position position="82"/>
    </location>
</feature>
<feature type="modified residue" description="S-nitrosocysteine" evidence="2">
    <location>
        <position position="93"/>
    </location>
</feature>
<feature type="modified residue" description="N6-acetyllysine" evidence="2">
    <location>
        <position position="144"/>
    </location>
</feature>
<dbReference type="PIR" id="A04621">
    <property type="entry name" value="HBMKB"/>
</dbReference>
<dbReference type="SMR" id="P02031"/>
<dbReference type="STRING" id="9531.ENSCATP00000005750"/>
<dbReference type="Proteomes" id="UP000233060">
    <property type="component" value="Unassembled WGS sequence"/>
</dbReference>
<dbReference type="GO" id="GO:0072562">
    <property type="term" value="C:blood microparticle"/>
    <property type="evidence" value="ECO:0007669"/>
    <property type="project" value="TreeGrafter"/>
</dbReference>
<dbReference type="GO" id="GO:0031838">
    <property type="term" value="C:haptoglobin-hemoglobin complex"/>
    <property type="evidence" value="ECO:0007669"/>
    <property type="project" value="TreeGrafter"/>
</dbReference>
<dbReference type="GO" id="GO:0005833">
    <property type="term" value="C:hemoglobin complex"/>
    <property type="evidence" value="ECO:0007669"/>
    <property type="project" value="InterPro"/>
</dbReference>
<dbReference type="GO" id="GO:0031720">
    <property type="term" value="F:haptoglobin binding"/>
    <property type="evidence" value="ECO:0007669"/>
    <property type="project" value="TreeGrafter"/>
</dbReference>
<dbReference type="GO" id="GO:0020037">
    <property type="term" value="F:heme binding"/>
    <property type="evidence" value="ECO:0007669"/>
    <property type="project" value="InterPro"/>
</dbReference>
<dbReference type="GO" id="GO:0031721">
    <property type="term" value="F:hemoglobin alpha binding"/>
    <property type="evidence" value="ECO:0007669"/>
    <property type="project" value="TreeGrafter"/>
</dbReference>
<dbReference type="GO" id="GO:0046872">
    <property type="term" value="F:metal ion binding"/>
    <property type="evidence" value="ECO:0007669"/>
    <property type="project" value="UniProtKB-KW"/>
</dbReference>
<dbReference type="GO" id="GO:0043177">
    <property type="term" value="F:organic acid binding"/>
    <property type="evidence" value="ECO:0007669"/>
    <property type="project" value="TreeGrafter"/>
</dbReference>
<dbReference type="GO" id="GO:0019825">
    <property type="term" value="F:oxygen binding"/>
    <property type="evidence" value="ECO:0007669"/>
    <property type="project" value="InterPro"/>
</dbReference>
<dbReference type="GO" id="GO:0005344">
    <property type="term" value="F:oxygen carrier activity"/>
    <property type="evidence" value="ECO:0007669"/>
    <property type="project" value="UniProtKB-KW"/>
</dbReference>
<dbReference type="GO" id="GO:0004601">
    <property type="term" value="F:peroxidase activity"/>
    <property type="evidence" value="ECO:0007669"/>
    <property type="project" value="TreeGrafter"/>
</dbReference>
<dbReference type="GO" id="GO:0042744">
    <property type="term" value="P:hydrogen peroxide catabolic process"/>
    <property type="evidence" value="ECO:0007669"/>
    <property type="project" value="TreeGrafter"/>
</dbReference>
<dbReference type="CDD" id="cd08925">
    <property type="entry name" value="Hb-beta-like"/>
    <property type="match status" value="1"/>
</dbReference>
<dbReference type="FunFam" id="1.10.490.10:FF:000001">
    <property type="entry name" value="Hemoglobin subunit beta"/>
    <property type="match status" value="1"/>
</dbReference>
<dbReference type="Gene3D" id="1.10.490.10">
    <property type="entry name" value="Globins"/>
    <property type="match status" value="1"/>
</dbReference>
<dbReference type="InterPro" id="IPR000971">
    <property type="entry name" value="Globin"/>
</dbReference>
<dbReference type="InterPro" id="IPR009050">
    <property type="entry name" value="Globin-like_sf"/>
</dbReference>
<dbReference type="InterPro" id="IPR012292">
    <property type="entry name" value="Globin/Proto"/>
</dbReference>
<dbReference type="InterPro" id="IPR002337">
    <property type="entry name" value="Hemoglobin_b"/>
</dbReference>
<dbReference type="InterPro" id="IPR050056">
    <property type="entry name" value="Hemoglobin_oxygen_transport"/>
</dbReference>
<dbReference type="PANTHER" id="PTHR11442">
    <property type="entry name" value="HEMOGLOBIN FAMILY MEMBER"/>
    <property type="match status" value="1"/>
</dbReference>
<dbReference type="PANTHER" id="PTHR11442:SF42">
    <property type="entry name" value="HEMOGLOBIN SUBUNIT BETA"/>
    <property type="match status" value="1"/>
</dbReference>
<dbReference type="Pfam" id="PF00042">
    <property type="entry name" value="Globin"/>
    <property type="match status" value="1"/>
</dbReference>
<dbReference type="PRINTS" id="PR00814">
    <property type="entry name" value="BETAHAEM"/>
</dbReference>
<dbReference type="SUPFAM" id="SSF46458">
    <property type="entry name" value="Globin-like"/>
    <property type="match status" value="1"/>
</dbReference>
<dbReference type="PROSITE" id="PS01033">
    <property type="entry name" value="GLOBIN"/>
    <property type="match status" value="1"/>
</dbReference>
<accession>P02031</accession>
<protein>
    <recommendedName>
        <fullName>Hemoglobin subunit beta</fullName>
    </recommendedName>
    <alternativeName>
        <fullName>Beta-globin</fullName>
    </alternativeName>
    <alternativeName>
        <fullName>Hemoglobin beta chain</fullName>
    </alternativeName>
</protein>
<reference key="1">
    <citation type="book" date="1976" name="Handbook of biochemistry and molecular biology (3rd ed.)">
        <editorList>
            <person name="Fasman G.D."/>
        </editorList>
        <authorList>
            <person name="Yasunobu K.T."/>
            <person name="Tanaka M."/>
        </authorList>
    </citation>
    <scope>PROTEIN SEQUENCE</scope>
</reference>
<proteinExistence type="evidence at protein level"/>
<name>HBB_CERAT</name>